<gene>
    <name type="primary">Cit</name>
    <name type="synonym">Crik</name>
</gene>
<proteinExistence type="evidence at protein level"/>
<feature type="chain" id="PRO_0000085909" description="Citron Rho-interacting kinase">
    <location>
        <begin position="1"/>
        <end position="2055"/>
    </location>
</feature>
<feature type="domain" description="Protein kinase" evidence="5">
    <location>
        <begin position="97"/>
        <end position="359"/>
    </location>
</feature>
<feature type="domain" description="AGC-kinase C-terminal" evidence="7">
    <location>
        <begin position="360"/>
        <end position="430"/>
    </location>
</feature>
<feature type="domain" description="PH" evidence="4">
    <location>
        <begin position="1469"/>
        <end position="1589"/>
    </location>
</feature>
<feature type="domain" description="CNH" evidence="8">
    <location>
        <begin position="1617"/>
        <end position="1907"/>
    </location>
</feature>
<feature type="zinc finger region" description="Phorbol-ester/DAG-type" evidence="6">
    <location>
        <begin position="1388"/>
        <end position="1437"/>
    </location>
</feature>
<feature type="region of interest" description="Interaction with Rho/Rac">
    <location>
        <begin position="1132"/>
        <end position="1328"/>
    </location>
</feature>
<feature type="region of interest" description="Disordered" evidence="10">
    <location>
        <begin position="1316"/>
        <end position="1336"/>
    </location>
</feature>
<feature type="region of interest" description="Disordered" evidence="10">
    <location>
        <begin position="1348"/>
        <end position="1377"/>
    </location>
</feature>
<feature type="region of interest" description="Disordered" evidence="10">
    <location>
        <begin position="1932"/>
        <end position="2040"/>
    </location>
</feature>
<feature type="coiled-coil region" evidence="3">
    <location>
        <begin position="441"/>
        <end position="1086"/>
    </location>
</feature>
<feature type="coiled-coil region" evidence="3">
    <location>
        <begin position="1091"/>
        <end position="1247"/>
    </location>
</feature>
<feature type="coiled-coil region" evidence="3">
    <location>
        <begin position="1275"/>
        <end position="1325"/>
    </location>
</feature>
<feature type="short sequence motif" description="SH3-binding" evidence="3">
    <location>
        <begin position="1979"/>
        <end position="1984"/>
    </location>
</feature>
<feature type="compositionally biased region" description="Basic and acidic residues" evidence="10">
    <location>
        <begin position="1316"/>
        <end position="1329"/>
    </location>
</feature>
<feature type="compositionally biased region" description="Low complexity" evidence="10">
    <location>
        <begin position="1353"/>
        <end position="1363"/>
    </location>
</feature>
<feature type="compositionally biased region" description="Basic and acidic residues" evidence="10">
    <location>
        <begin position="1365"/>
        <end position="1377"/>
    </location>
</feature>
<feature type="compositionally biased region" description="Polar residues" evidence="10">
    <location>
        <begin position="1939"/>
        <end position="1948"/>
    </location>
</feature>
<feature type="compositionally biased region" description="Basic and acidic residues" evidence="10">
    <location>
        <begin position="1974"/>
        <end position="2031"/>
    </location>
</feature>
<feature type="active site" description="Proton acceptor" evidence="5 9">
    <location>
        <position position="221"/>
    </location>
</feature>
<feature type="binding site" evidence="5">
    <location>
        <begin position="103"/>
        <end position="111"/>
    </location>
    <ligand>
        <name>ATP</name>
        <dbReference type="ChEBI" id="CHEBI:30616"/>
    </ligand>
</feature>
<feature type="binding site" evidence="5">
    <location>
        <position position="126"/>
    </location>
    <ligand>
        <name>ATP</name>
        <dbReference type="ChEBI" id="CHEBI:30616"/>
    </ligand>
</feature>
<feature type="modified residue" description="N-acetylmethionine" evidence="2">
    <location>
        <position position="1"/>
    </location>
</feature>
<feature type="modified residue" description="Phosphoserine" evidence="2">
    <location>
        <position position="432"/>
    </location>
</feature>
<feature type="modified residue" description="Phosphoserine" evidence="23">
    <location>
        <position position="439"/>
    </location>
</feature>
<feature type="modified residue" description="Phosphoserine" evidence="21 23">
    <location>
        <position position="479"/>
    </location>
</feature>
<feature type="modified residue" description="Phosphoserine" evidence="2">
    <location>
        <position position="581"/>
    </location>
</feature>
<feature type="modified residue" description="Phosphotyrosine" evidence="22">
    <location>
        <position position="1237"/>
    </location>
</feature>
<feature type="modified residue" description="N6-acetyllysine" evidence="2">
    <location>
        <position position="1747"/>
    </location>
</feature>
<feature type="modified residue" description="Phosphoserine" evidence="2">
    <location>
        <position position="1966"/>
    </location>
</feature>
<feature type="modified residue" description="Phosphoserine" evidence="2">
    <location>
        <position position="2021"/>
    </location>
</feature>
<feature type="modified residue" description="Phosphothreonine" evidence="2">
    <location>
        <position position="2041"/>
    </location>
</feature>
<feature type="splice variant" id="VSP_012436" description="In isoform 3." evidence="17">
    <location>
        <begin position="1"/>
        <end position="458"/>
    </location>
</feature>
<feature type="splice variant" id="VSP_012437" description="In isoform 3." evidence="17">
    <original>DSQDKCHK</original>
    <variation>MLLGEEAM</variation>
    <location>
        <begin position="459"/>
        <end position="466"/>
    </location>
</feature>
<feature type="splice variant" id="VSP_012438" description="In isoform 2." evidence="16 19">
    <original>MEQEMTRLHRRVSEVEAVLSQKEVELKA</original>
    <variation>VSISTAGLRPCSRILQSIYAEGSAGGHC</variation>
    <location>
        <begin position="467"/>
        <end position="494"/>
    </location>
</feature>
<feature type="splice variant" id="VSP_012439" description="In isoform 2." evidence="16 19">
    <location>
        <begin position="495"/>
        <end position="2055"/>
    </location>
</feature>
<feature type="splice variant" id="VSP_016093" description="In isoform 4." evidence="18">
    <location>
        <begin position="693"/>
        <end position="735"/>
    </location>
</feature>
<feature type="splice variant" id="VSP_016094" description="In isoform 5." evidence="15">
    <original>K</original>
    <variation>KGLFSRRKEDPALPTQ</variation>
    <location>
        <position position="1279"/>
    </location>
</feature>
<feature type="splice variant" id="VSP_016095" description="In isoform 5." evidence="15">
    <original>A</original>
    <variation>AARDHTSSEHQPVWVE</variation>
    <location>
        <position position="1602"/>
    </location>
</feature>
<feature type="mutagenesis site" description="Loss of phosphorylation." evidence="14">
    <original>K</original>
    <variation>A</variation>
    <location>
        <position position="126"/>
    </location>
</feature>
<feature type="sequence conflict" description="In Ref. 3; BAE26199." evidence="20" ref="3">
    <original>Q</original>
    <variation>R</variation>
    <location>
        <position position="78"/>
    </location>
</feature>
<feature type="sequence conflict" description="In Ref. 3; BAE26199." evidence="20" ref="3">
    <original>F</original>
    <variation>L</variation>
    <location>
        <position position="182"/>
    </location>
</feature>
<feature type="sequence conflict" description="In Ref. 3; BAE26199." evidence="20" ref="3">
    <original>E</original>
    <variation>H</variation>
    <location>
        <position position="234"/>
    </location>
</feature>
<feature type="sequence conflict" description="In Ref. 6; AAH51165." evidence="20" ref="6">
    <location>
        <position position="1945"/>
    </location>
</feature>
<comment type="function">
    <text evidence="11 12 13 14">Plays a role in cytokinesis. Required for KIF14 localization to the central spindle and midbody. Probable RHO/RAC effector that binds to the GTP-bound forms of RHO and RAC1. It probably binds p21 with a tighter specificity in vivo. Displays serine/threonine protein kinase activity. Plays an important role in the regulation of cytokinesis and the development of the central nervous system. Phosphorylates MYL9/MLC2.</text>
</comment>
<comment type="catalytic activity">
    <reaction evidence="14">
        <text>L-seryl-[protein] + ATP = O-phospho-L-seryl-[protein] + ADP + H(+)</text>
        <dbReference type="Rhea" id="RHEA:17989"/>
        <dbReference type="Rhea" id="RHEA-COMP:9863"/>
        <dbReference type="Rhea" id="RHEA-COMP:11604"/>
        <dbReference type="ChEBI" id="CHEBI:15378"/>
        <dbReference type="ChEBI" id="CHEBI:29999"/>
        <dbReference type="ChEBI" id="CHEBI:30616"/>
        <dbReference type="ChEBI" id="CHEBI:83421"/>
        <dbReference type="ChEBI" id="CHEBI:456216"/>
        <dbReference type="EC" id="2.7.11.1"/>
    </reaction>
</comment>
<comment type="catalytic activity">
    <reaction evidence="14">
        <text>L-threonyl-[protein] + ATP = O-phospho-L-threonyl-[protein] + ADP + H(+)</text>
        <dbReference type="Rhea" id="RHEA:46608"/>
        <dbReference type="Rhea" id="RHEA-COMP:11060"/>
        <dbReference type="Rhea" id="RHEA-COMP:11605"/>
        <dbReference type="ChEBI" id="CHEBI:15378"/>
        <dbReference type="ChEBI" id="CHEBI:30013"/>
        <dbReference type="ChEBI" id="CHEBI:30616"/>
        <dbReference type="ChEBI" id="CHEBI:61977"/>
        <dbReference type="ChEBI" id="CHEBI:456216"/>
        <dbReference type="EC" id="2.7.11.1"/>
    </reaction>
</comment>
<comment type="subunit">
    <text evidence="1 20">Interacts with TTC3 (By similarity). Homodimer (Probable). Directly interacts with KIF14 depending on the activation state (stronger interaction with the kinase-dead form).</text>
</comment>
<comment type="subcellular location">
    <subcellularLocation>
        <location evidence="14">Cytoplasm</location>
    </subcellularLocation>
</comment>
<comment type="alternative products">
    <event type="alternative splicing"/>
    <isoform>
        <id>P49025-1</id>
        <name>1</name>
        <name>CRIK</name>
        <sequence type="displayed"/>
    </isoform>
    <isoform>
        <id>P49025-2</id>
        <name>2</name>
        <name>CRIK-SK</name>
        <sequence type="described" ref="VSP_012438 VSP_012439"/>
    </isoform>
    <isoform>
        <id>P49025-3</id>
        <name>3</name>
        <name>Citron</name>
        <sequence type="described" ref="VSP_012436 VSP_012437"/>
    </isoform>
    <isoform>
        <id>P49025-4</id>
        <name>4</name>
        <sequence type="described" ref="VSP_016093"/>
    </isoform>
    <isoform>
        <id>P49025-5</id>
        <name>5</name>
        <sequence type="described" ref="VSP_016094 VSP_016095"/>
    </isoform>
    <text>Additional isoforms seem to exist.</text>
</comment>
<comment type="tissue specificity">
    <text evidence="11 14">A major signal was observed in testis and brain, but it was also detected in thymus, spleen, kidney, heart and lung.</text>
</comment>
<comment type="developmental stage">
    <text evidence="11">Detected at 10.5 dpc with highest expression in the developing central nervous system. After 16.5 dpc expression decreases and at two weeks after birth is restricted to the proliferating neuronal precursor cells in the external germinal layer of the cerebellum and subventricular migratory stream.</text>
</comment>
<comment type="disruption phenotype">
    <text evidence="11">Death before reaching adulthood, probably due to lethal epilepsy. Mice display severe defects in the olfactory bulbs, the hippocampus, and the cerebellum. These defects appear to result from impaired cytokinesis followed by the induction of apoptosis in specific neuroblast populations.</text>
</comment>
<comment type="similarity">
    <text evidence="20">Belongs to the protein kinase superfamily. AGC Ser/Thr protein kinase family.</text>
</comment>
<comment type="sequence caution" evidence="20">
    <conflict type="frameshift">
        <sequence resource="EMBL-CDS" id="AAC72822"/>
    </conflict>
</comment>
<comment type="sequence caution" evidence="20">
    <conflict type="frameshift">
        <sequence resource="EMBL-CDS" id="AAC72823"/>
    </conflict>
</comment>
<comment type="sequence caution" evidence="20">
    <conflict type="frameshift">
        <sequence resource="EMBL-CDS" id="AAH23775"/>
    </conflict>
</comment>
<comment type="sequence caution" evidence="20">
    <conflict type="frameshift">
        <sequence resource="EMBL-CDS" id="AAH51165"/>
    </conflict>
</comment>
<keyword id="KW-0007">Acetylation</keyword>
<keyword id="KW-0025">Alternative splicing</keyword>
<keyword id="KW-0067">ATP-binding</keyword>
<keyword id="KW-0131">Cell cycle</keyword>
<keyword id="KW-0132">Cell division</keyword>
<keyword id="KW-0175">Coiled coil</keyword>
<keyword id="KW-0963">Cytoplasm</keyword>
<keyword id="KW-0217">Developmental protein</keyword>
<keyword id="KW-0221">Differentiation</keyword>
<keyword id="KW-0903">Direct protein sequencing</keyword>
<keyword id="KW-0418">Kinase</keyword>
<keyword id="KW-0479">Metal-binding</keyword>
<keyword id="KW-0498">Mitosis</keyword>
<keyword id="KW-0524">Neurogenesis</keyword>
<keyword id="KW-0547">Nucleotide-binding</keyword>
<keyword id="KW-0597">Phosphoprotein</keyword>
<keyword id="KW-1185">Reference proteome</keyword>
<keyword id="KW-0723">Serine/threonine-protein kinase</keyword>
<keyword id="KW-0729">SH3-binding</keyword>
<keyword id="KW-0808">Transferase</keyword>
<keyword id="KW-0862">Zinc</keyword>
<keyword id="KW-0863">Zinc-finger</keyword>
<organism>
    <name type="scientific">Mus musculus</name>
    <name type="common">Mouse</name>
    <dbReference type="NCBI Taxonomy" id="10090"/>
    <lineage>
        <taxon>Eukaryota</taxon>
        <taxon>Metazoa</taxon>
        <taxon>Chordata</taxon>
        <taxon>Craniata</taxon>
        <taxon>Vertebrata</taxon>
        <taxon>Euteleostomi</taxon>
        <taxon>Mammalia</taxon>
        <taxon>Eutheria</taxon>
        <taxon>Euarchontoglires</taxon>
        <taxon>Glires</taxon>
        <taxon>Rodentia</taxon>
        <taxon>Myomorpha</taxon>
        <taxon>Muroidea</taxon>
        <taxon>Muridae</taxon>
        <taxon>Murinae</taxon>
        <taxon>Mus</taxon>
        <taxon>Mus</taxon>
    </lineage>
</organism>
<evidence type="ECO:0000250" key="1"/>
<evidence type="ECO:0000250" key="2">
    <source>
        <dbReference type="UniProtKB" id="O14578"/>
    </source>
</evidence>
<evidence type="ECO:0000255" key="3"/>
<evidence type="ECO:0000255" key="4">
    <source>
        <dbReference type="PROSITE-ProRule" id="PRU00145"/>
    </source>
</evidence>
<evidence type="ECO:0000255" key="5">
    <source>
        <dbReference type="PROSITE-ProRule" id="PRU00159"/>
    </source>
</evidence>
<evidence type="ECO:0000255" key="6">
    <source>
        <dbReference type="PROSITE-ProRule" id="PRU00226"/>
    </source>
</evidence>
<evidence type="ECO:0000255" key="7">
    <source>
        <dbReference type="PROSITE-ProRule" id="PRU00618"/>
    </source>
</evidence>
<evidence type="ECO:0000255" key="8">
    <source>
        <dbReference type="PROSITE-ProRule" id="PRU00795"/>
    </source>
</evidence>
<evidence type="ECO:0000255" key="9">
    <source>
        <dbReference type="PROSITE-ProRule" id="PRU10027"/>
    </source>
</evidence>
<evidence type="ECO:0000256" key="10">
    <source>
        <dbReference type="SAM" id="MobiDB-lite"/>
    </source>
</evidence>
<evidence type="ECO:0000269" key="11">
    <source>
    </source>
</evidence>
<evidence type="ECO:0000269" key="12">
    <source>
    </source>
</evidence>
<evidence type="ECO:0000269" key="13">
    <source>
    </source>
</evidence>
<evidence type="ECO:0000269" key="14">
    <source>
    </source>
</evidence>
<evidence type="ECO:0000303" key="15">
    <source>
    </source>
</evidence>
<evidence type="ECO:0000303" key="16">
    <source>
    </source>
</evidence>
<evidence type="ECO:0000303" key="17">
    <source>
    </source>
</evidence>
<evidence type="ECO:0000303" key="18">
    <source>
    </source>
</evidence>
<evidence type="ECO:0000303" key="19">
    <source>
    </source>
</evidence>
<evidence type="ECO:0000305" key="20"/>
<evidence type="ECO:0007744" key="21">
    <source>
    </source>
</evidence>
<evidence type="ECO:0007744" key="22">
    <source>
    </source>
</evidence>
<evidence type="ECO:0007744" key="23">
    <source>
    </source>
</evidence>
<name>CTRO_MOUSE</name>
<sequence length="2055" mass="235389">MLKFKYGVRNPPEASASEPIASRASRLNLFFQGKPPLMTQQQMSALSREGMLDALFALFEECSQPALMKMKHVSSFVQKYSDTIAELRELQPSARDFEVRSLVGCGHFAEVQVVREKATGDVYAMKIMKKKALLAQEQVSFFEEERNILSRSTSPWIPQLQYAFQDKNNLYLVMEYQPGGDFLSLLNRYEDQLDESMIQFYLAELILAVHSVHQMGYVHRDIKPENILIDRTGEIKLVDFGSAAKMNSNKVDAKLPIGTPDYMAPEVLTVMNEDRRGTYGLDCDWWSVGVVAYEMVYGKTPFTEGTSARTFNNIMNFQRFLKFPDDPKVSSELLDLLQSLLCVQKERLKFEGLCCHPFFARTDWNNIRNSPPPFVPTLKSDDDTSNFDEPEKNSWVSSSVCQLSPSGFSGEELPFVGFSYSKALGYLGRSESVVSSLDSPAKVSSMEKKLLIKSKELQDSQDKCHKMEQEMTRLHRRVSEVEAVLSQKEVELKASETQRSLLEQDLATYITECSSLKRSLEQARMEVSQEDDKALQLLHDIREQSRKLQEIKEQEYQAQVEEMRLMMNQLEEDLVSARRRSDLYESELRESRLAAEEFKRKANECQHKLMKAKDQGKPEVGEYSKLEKINAEQQLKIQELQEKLEKAVKASTEATELLQNIRQAKERAERELEKLHNREDSSEGIKKKLVEAEERRHSLENKVKRLETMERRENRLKDDIQTKSEQIQQMADKILELEEKHREAQVSAQHLEVHLKQKEQHYEEKIKVLDNQIKKDLADKESLENMMQRHEEEAHEKGKILSEQKAMINAMDSKIRSLEQRIVELSEANKLAANSSLFTQRNMKAQEEMISELRQQKFYLETQAGKLEAQNRKLEEQLEKISHQDHSDKSRLLELETRLREVSLEHEEQKLELKRQLTELQLSLQERESQLTALQAARAALESQLRQAKTELEETTAEAEEEIQALTAHRDEIQRKFDALRNSCTVITDLEEQLNQLTEDNAELNNQNFYLSKQLDEASGANDEIVQLRSEVDHLRREITEREMQLTSQKQTMEALKTTCTMLEEQVLDLEALNDELLEKERQWEAWRSVLGDEKSQFECRVRELQRMLDTEKQSRARADQRITESRQVVELAVKEHKAEILALQQALKEQKLKAESLSDKLNDLEKKHAMLEMNARSLQQKLETERELKQRLLEEQAKLQQQMDLQKNHIFRLTQGLQEALDRADLLKTERSDLEYQLENIQVLYSHEKVKMEGTISQQTKLIDFLQAKMDQPAKKKKVPLQYNELKLALEKEKARCAELEEALQKTRIELRSAREEAAHRKATDHPHPSTPATARQQIAMSAIVRSPEHQPSAMSLLAPPSSRRKESSTPEEFSRRLKERMHHNIPHRFNVGLNMRATKCAVCLDTVHFGRQASKCLECQVMCHPKCSTCLPATCGLPAEYATHFTEAFCRDKMNSPGLQSKEPGSSLHLEGWMKVPRNNKRGQQGWDRKYIVLEGSKVLIYDNEAREAGQRPVEEFELCLPDGDVSIHGAVGASELANTAKADVPYILKMESHPHTTCWPGRTLYLLAPSFPDKQRWVTALESVVAGGRVSREKAEADAKLLGNSLLKLEGDDRLDMNCTLPFSDQVVLVGTEEGLYALNVLKNSLTHIPGIGAVFQIYIIKDLEKLLMIAGEERALCLVDVKKVKQSLAQSHLPAQPDVSPNIFEAVKGCHLFAAGKIENSLCICAAMPSKVVILRYNDNLSKYCIRKEIETSEPCSCIHFTNYSILIGTNKFYEIDMKQYTLDEFLDKNDHSLAPAVFASSSNSFPVSIVQANSAGQREEYLLCFHEFGVFVDSYGRRSRTDDLKWSRLPLAFAYREPYLFVTHFNSLEVIEIQARSSLGSPARAYLEIPNPRYLGPAISSGAIYLASSYQDKLRVICCKGNLVKESGTEQHRVPSTSRSSPNKRGPPTYNEHITKRVASSPAPPEGPSHPREPSTPHRYRDREGRTELRRDKSPGRPLEREKSPGRMLSTRRERSPGRLFEDSSRGRLPAGAVRTPLSQVNKVWDQSSV</sequence>
<protein>
    <recommendedName>
        <fullName>Citron Rho-interacting kinase</fullName>
        <shortName>CRIK</shortName>
        <ecNumber evidence="14">2.7.11.1</ecNumber>
    </recommendedName>
    <alternativeName>
        <fullName>Rho-interacting, serine/threonine-protein kinase 21</fullName>
    </alternativeName>
</protein>
<accession>P49025</accession>
<accession>O88528</accession>
<accession>O88937</accession>
<accession>O88938</accession>
<accession>Q3UM99</accession>
<accession>Q8CIJ1</accession>
<dbReference type="EC" id="2.7.11.1" evidence="14"/>
<dbReference type="EMBL" id="U39904">
    <property type="protein sequence ID" value="AAC52341.1"/>
    <property type="molecule type" value="mRNA"/>
</dbReference>
<dbReference type="EMBL" id="AF086823">
    <property type="protein sequence ID" value="AAC72822.1"/>
    <property type="status" value="ALT_FRAME"/>
    <property type="molecule type" value="mRNA"/>
</dbReference>
<dbReference type="EMBL" id="AF086824">
    <property type="protein sequence ID" value="AAC72823.1"/>
    <property type="status" value="ALT_FRAME"/>
    <property type="molecule type" value="mRNA"/>
</dbReference>
<dbReference type="EMBL" id="AK145037">
    <property type="protein sequence ID" value="BAE26199.1"/>
    <property type="molecule type" value="mRNA"/>
</dbReference>
<dbReference type="EMBL" id="AF070066">
    <property type="protein sequence ID" value="AAC27933.1"/>
    <property type="molecule type" value="mRNA"/>
</dbReference>
<dbReference type="EMBL" id="BC023775">
    <property type="protein sequence ID" value="AAH23775.1"/>
    <property type="status" value="ALT_FRAME"/>
    <property type="molecule type" value="mRNA"/>
</dbReference>
<dbReference type="EMBL" id="BC051165">
    <property type="protein sequence ID" value="AAH51165.1"/>
    <property type="status" value="ALT_FRAME"/>
    <property type="molecule type" value="mRNA"/>
</dbReference>
<dbReference type="CCDS" id="CCDS19597.1">
    <molecule id="P49025-1"/>
</dbReference>
<dbReference type="PIR" id="S68420">
    <property type="entry name" value="S68420"/>
</dbReference>
<dbReference type="RefSeq" id="XP_006530214.1">
    <molecule id="P49025-3"/>
    <property type="nucleotide sequence ID" value="XM_006530151.5"/>
</dbReference>
<dbReference type="SMR" id="P49025"/>
<dbReference type="BioGRID" id="198720">
    <property type="interactions" value="30"/>
</dbReference>
<dbReference type="FunCoup" id="P49025">
    <property type="interactions" value="605"/>
</dbReference>
<dbReference type="IntAct" id="P49025">
    <property type="interactions" value="12"/>
</dbReference>
<dbReference type="MINT" id="P49025"/>
<dbReference type="STRING" id="10090.ENSMUSP00000062049"/>
<dbReference type="GlyGen" id="P49025">
    <property type="glycosylation" value="2 sites, 2 N-linked glycans (2 sites)"/>
</dbReference>
<dbReference type="iPTMnet" id="P49025"/>
<dbReference type="PhosphoSitePlus" id="P49025"/>
<dbReference type="SwissPalm" id="P49025"/>
<dbReference type="jPOST" id="P49025"/>
<dbReference type="PaxDb" id="10090-ENSMUSP00000062049"/>
<dbReference type="PeptideAtlas" id="P49025"/>
<dbReference type="ProteomicsDB" id="279202">
    <molecule id="P49025-1"/>
</dbReference>
<dbReference type="ProteomicsDB" id="279203">
    <molecule id="P49025-2"/>
</dbReference>
<dbReference type="ProteomicsDB" id="279204">
    <molecule id="P49025-3"/>
</dbReference>
<dbReference type="ProteomicsDB" id="279205">
    <molecule id="P49025-4"/>
</dbReference>
<dbReference type="ProteomicsDB" id="279206">
    <molecule id="P49025-5"/>
</dbReference>
<dbReference type="Pumba" id="P49025"/>
<dbReference type="DNASU" id="12704"/>
<dbReference type="GeneID" id="12704"/>
<dbReference type="UCSC" id="uc008zep.1">
    <molecule id="P49025-2"/>
    <property type="organism name" value="mouse"/>
</dbReference>
<dbReference type="UCSC" id="uc008zet.1">
    <molecule id="P49025-3"/>
    <property type="organism name" value="mouse"/>
</dbReference>
<dbReference type="AGR" id="MGI:105313"/>
<dbReference type="CTD" id="11113"/>
<dbReference type="MGI" id="MGI:105313">
    <property type="gene designation" value="Cit"/>
</dbReference>
<dbReference type="eggNOG" id="KOG0612">
    <property type="taxonomic scope" value="Eukaryota"/>
</dbReference>
<dbReference type="eggNOG" id="KOG0976">
    <property type="taxonomic scope" value="Eukaryota"/>
</dbReference>
<dbReference type="InParanoid" id="P49025"/>
<dbReference type="PhylomeDB" id="P49025"/>
<dbReference type="Reactome" id="R-MMU-5625900">
    <property type="pathway name" value="RHO GTPases activate CIT"/>
</dbReference>
<dbReference type="Reactome" id="R-MMU-8980692">
    <property type="pathway name" value="RHOA GTPase cycle"/>
</dbReference>
<dbReference type="Reactome" id="R-MMU-9013026">
    <property type="pathway name" value="RHOB GTPase cycle"/>
</dbReference>
<dbReference type="Reactome" id="R-MMU-9013106">
    <property type="pathway name" value="RHOC GTPase cycle"/>
</dbReference>
<dbReference type="Reactome" id="R-MMU-9013149">
    <property type="pathway name" value="RAC1 GTPase cycle"/>
</dbReference>
<dbReference type="BioGRID-ORCS" id="12704">
    <property type="hits" value="8 hits in 33 CRISPR screens"/>
</dbReference>
<dbReference type="CD-CODE" id="CE726F99">
    <property type="entry name" value="Postsynaptic density"/>
</dbReference>
<dbReference type="ChiTaRS" id="Cit">
    <property type="organism name" value="mouse"/>
</dbReference>
<dbReference type="PRO" id="PR:P49025"/>
<dbReference type="Proteomes" id="UP000000589">
    <property type="component" value="Unplaced"/>
</dbReference>
<dbReference type="RNAct" id="P49025">
    <property type="molecule type" value="protein"/>
</dbReference>
<dbReference type="GO" id="GO:0015629">
    <property type="term" value="C:actin cytoskeleton"/>
    <property type="evidence" value="ECO:0000314"/>
    <property type="project" value="MGI"/>
</dbReference>
<dbReference type="GO" id="GO:0005737">
    <property type="term" value="C:cytoplasm"/>
    <property type="evidence" value="ECO:0000314"/>
    <property type="project" value="MGI"/>
</dbReference>
<dbReference type="GO" id="GO:0005829">
    <property type="term" value="C:cytosol"/>
    <property type="evidence" value="ECO:0000304"/>
    <property type="project" value="Reactome"/>
</dbReference>
<dbReference type="GO" id="GO:0001726">
    <property type="term" value="C:ruffle"/>
    <property type="evidence" value="ECO:0000314"/>
    <property type="project" value="MGI"/>
</dbReference>
<dbReference type="GO" id="GO:0005773">
    <property type="term" value="C:vacuole"/>
    <property type="evidence" value="ECO:0000314"/>
    <property type="project" value="MGI"/>
</dbReference>
<dbReference type="GO" id="GO:0005524">
    <property type="term" value="F:ATP binding"/>
    <property type="evidence" value="ECO:0007669"/>
    <property type="project" value="UniProtKB-KW"/>
</dbReference>
<dbReference type="GO" id="GO:0106310">
    <property type="term" value="F:protein serine kinase activity"/>
    <property type="evidence" value="ECO:0007669"/>
    <property type="project" value="RHEA"/>
</dbReference>
<dbReference type="GO" id="GO:0004674">
    <property type="term" value="F:protein serine/threonine kinase activity"/>
    <property type="evidence" value="ECO:0000314"/>
    <property type="project" value="UniProtKB"/>
</dbReference>
<dbReference type="GO" id="GO:0017124">
    <property type="term" value="F:SH3 domain binding"/>
    <property type="evidence" value="ECO:0007669"/>
    <property type="project" value="UniProtKB-KW"/>
</dbReference>
<dbReference type="GO" id="GO:0008270">
    <property type="term" value="F:zinc ion binding"/>
    <property type="evidence" value="ECO:0007669"/>
    <property type="project" value="UniProtKB-KW"/>
</dbReference>
<dbReference type="GO" id="GO:0016358">
    <property type="term" value="P:dendrite development"/>
    <property type="evidence" value="ECO:0000315"/>
    <property type="project" value="MGI"/>
</dbReference>
<dbReference type="GO" id="GO:0048699">
    <property type="term" value="P:generation of neurons"/>
    <property type="evidence" value="ECO:0000314"/>
    <property type="project" value="UniProtKB"/>
</dbReference>
<dbReference type="GO" id="GO:0007091">
    <property type="term" value="P:metaphase/anaphase transition of mitotic cell cycle"/>
    <property type="evidence" value="ECO:0000315"/>
    <property type="project" value="MGI"/>
</dbReference>
<dbReference type="GO" id="GO:0000278">
    <property type="term" value="P:mitotic cell cycle"/>
    <property type="evidence" value="ECO:0000314"/>
    <property type="project" value="UniProtKB"/>
</dbReference>
<dbReference type="GO" id="GO:0000281">
    <property type="term" value="P:mitotic cytokinesis"/>
    <property type="evidence" value="ECO:0000250"/>
    <property type="project" value="UniProtKB"/>
</dbReference>
<dbReference type="GO" id="GO:0000070">
    <property type="term" value="P:mitotic sister chromatid segregation"/>
    <property type="evidence" value="ECO:0000315"/>
    <property type="project" value="MGI"/>
</dbReference>
<dbReference type="GO" id="GO:0030517">
    <property type="term" value="P:negative regulation of axon extension"/>
    <property type="evidence" value="ECO:0000314"/>
    <property type="project" value="MGI"/>
</dbReference>
<dbReference type="GO" id="GO:0050774">
    <property type="term" value="P:negative regulation of dendrite morphogenesis"/>
    <property type="evidence" value="ECO:0000314"/>
    <property type="project" value="MGI"/>
</dbReference>
<dbReference type="GO" id="GO:0045665">
    <property type="term" value="P:negative regulation of neuron differentiation"/>
    <property type="evidence" value="ECO:0000314"/>
    <property type="project" value="MGI"/>
</dbReference>
<dbReference type="GO" id="GO:0051402">
    <property type="term" value="P:neuron apoptotic process"/>
    <property type="evidence" value="ECO:0000250"/>
    <property type="project" value="UniProtKB"/>
</dbReference>
<dbReference type="GO" id="GO:0007283">
    <property type="term" value="P:spermatogenesis"/>
    <property type="evidence" value="ECO:0000315"/>
    <property type="project" value="MGI"/>
</dbReference>
<dbReference type="CDD" id="cd20814">
    <property type="entry name" value="CRIK"/>
    <property type="match status" value="1"/>
</dbReference>
<dbReference type="CDD" id="cd05601">
    <property type="entry name" value="STKc_CRIK"/>
    <property type="match status" value="1"/>
</dbReference>
<dbReference type="FunFam" id="1.10.510.10:FF:000234">
    <property type="entry name" value="Citron rho-interacting serine/threonine kinase"/>
    <property type="match status" value="1"/>
</dbReference>
<dbReference type="FunFam" id="2.30.29.30:FF:000081">
    <property type="entry name" value="Citron rho-interacting serine/threonine kinase"/>
    <property type="match status" value="1"/>
</dbReference>
<dbReference type="FunFam" id="3.30.200.20:FF:000224">
    <property type="entry name" value="Citron rho-interacting serine/threonine kinase"/>
    <property type="match status" value="1"/>
</dbReference>
<dbReference type="FunFam" id="3.30.60.20:FF:000018">
    <property type="entry name" value="Citron rho-interacting serine/threonine kinase"/>
    <property type="match status" value="1"/>
</dbReference>
<dbReference type="Gene3D" id="1.20.5.170">
    <property type="match status" value="1"/>
</dbReference>
<dbReference type="Gene3D" id="1.20.5.340">
    <property type="match status" value="1"/>
</dbReference>
<dbReference type="Gene3D" id="3.30.60.20">
    <property type="match status" value="1"/>
</dbReference>
<dbReference type="Gene3D" id="3.30.200.20">
    <property type="entry name" value="Phosphorylase Kinase, domain 1"/>
    <property type="match status" value="1"/>
</dbReference>
<dbReference type="Gene3D" id="2.30.29.30">
    <property type="entry name" value="Pleckstrin-homology domain (PH domain)/Phosphotyrosine-binding domain (PTB)"/>
    <property type="match status" value="1"/>
</dbReference>
<dbReference type="Gene3D" id="1.10.510.10">
    <property type="entry name" value="Transferase(Phosphotransferase) domain 1"/>
    <property type="match status" value="1"/>
</dbReference>
<dbReference type="InterPro" id="IPR000961">
    <property type="entry name" value="AGC-kinase_C"/>
</dbReference>
<dbReference type="InterPro" id="IPR046349">
    <property type="entry name" value="C1-like_sf"/>
</dbReference>
<dbReference type="InterPro" id="IPR017405">
    <property type="entry name" value="Citron_Rho-interacting_kinase"/>
</dbReference>
<dbReference type="InterPro" id="IPR001180">
    <property type="entry name" value="CNH_dom"/>
</dbReference>
<dbReference type="InterPro" id="IPR037708">
    <property type="entry name" value="CRIK_dom"/>
</dbReference>
<dbReference type="InterPro" id="IPR011009">
    <property type="entry name" value="Kinase-like_dom_sf"/>
</dbReference>
<dbReference type="InterPro" id="IPR002219">
    <property type="entry name" value="PE/DAG-bd"/>
</dbReference>
<dbReference type="InterPro" id="IPR011993">
    <property type="entry name" value="PH-like_dom_sf"/>
</dbReference>
<dbReference type="InterPro" id="IPR001849">
    <property type="entry name" value="PH_domain"/>
</dbReference>
<dbReference type="InterPro" id="IPR017892">
    <property type="entry name" value="Pkinase_C"/>
</dbReference>
<dbReference type="InterPro" id="IPR000719">
    <property type="entry name" value="Prot_kinase_dom"/>
</dbReference>
<dbReference type="InterPro" id="IPR017441">
    <property type="entry name" value="Protein_kinase_ATP_BS"/>
</dbReference>
<dbReference type="InterPro" id="IPR050839">
    <property type="entry name" value="Rho-assoc_Ser/Thr_Kinase"/>
</dbReference>
<dbReference type="InterPro" id="IPR008271">
    <property type="entry name" value="Ser/Thr_kinase_AS"/>
</dbReference>
<dbReference type="PANTHER" id="PTHR22988:SF71">
    <property type="entry name" value="CITRON RHO-INTERACTING KINASE"/>
    <property type="match status" value="1"/>
</dbReference>
<dbReference type="PANTHER" id="PTHR22988">
    <property type="entry name" value="MYOTONIC DYSTROPHY S/T KINASE-RELATED"/>
    <property type="match status" value="1"/>
</dbReference>
<dbReference type="Pfam" id="PF00780">
    <property type="entry name" value="CNH"/>
    <property type="match status" value="1"/>
</dbReference>
<dbReference type="Pfam" id="PF00169">
    <property type="entry name" value="PH"/>
    <property type="match status" value="1"/>
</dbReference>
<dbReference type="Pfam" id="PF00069">
    <property type="entry name" value="Pkinase"/>
    <property type="match status" value="1"/>
</dbReference>
<dbReference type="Pfam" id="PF00433">
    <property type="entry name" value="Pkinase_C"/>
    <property type="match status" value="1"/>
</dbReference>
<dbReference type="PIRSF" id="PIRSF038145">
    <property type="entry name" value="Citron_Rho-interacting_kinase"/>
    <property type="match status" value="1"/>
</dbReference>
<dbReference type="SMART" id="SM00109">
    <property type="entry name" value="C1"/>
    <property type="match status" value="1"/>
</dbReference>
<dbReference type="SMART" id="SM00036">
    <property type="entry name" value="CNH"/>
    <property type="match status" value="1"/>
</dbReference>
<dbReference type="SMART" id="SM00233">
    <property type="entry name" value="PH"/>
    <property type="match status" value="1"/>
</dbReference>
<dbReference type="SMART" id="SM00133">
    <property type="entry name" value="S_TK_X"/>
    <property type="match status" value="1"/>
</dbReference>
<dbReference type="SMART" id="SM00220">
    <property type="entry name" value="S_TKc"/>
    <property type="match status" value="1"/>
</dbReference>
<dbReference type="SUPFAM" id="SSF57889">
    <property type="entry name" value="Cysteine-rich domain"/>
    <property type="match status" value="1"/>
</dbReference>
<dbReference type="SUPFAM" id="SSF50729">
    <property type="entry name" value="PH domain-like"/>
    <property type="match status" value="1"/>
</dbReference>
<dbReference type="SUPFAM" id="SSF56112">
    <property type="entry name" value="Protein kinase-like (PK-like)"/>
    <property type="match status" value="1"/>
</dbReference>
<dbReference type="PROSITE" id="PS51285">
    <property type="entry name" value="AGC_KINASE_CTER"/>
    <property type="match status" value="1"/>
</dbReference>
<dbReference type="PROSITE" id="PS50219">
    <property type="entry name" value="CNH"/>
    <property type="match status" value="1"/>
</dbReference>
<dbReference type="PROSITE" id="PS50003">
    <property type="entry name" value="PH_DOMAIN"/>
    <property type="match status" value="1"/>
</dbReference>
<dbReference type="PROSITE" id="PS00107">
    <property type="entry name" value="PROTEIN_KINASE_ATP"/>
    <property type="match status" value="1"/>
</dbReference>
<dbReference type="PROSITE" id="PS50011">
    <property type="entry name" value="PROTEIN_KINASE_DOM"/>
    <property type="match status" value="1"/>
</dbReference>
<dbReference type="PROSITE" id="PS00108">
    <property type="entry name" value="PROTEIN_KINASE_ST"/>
    <property type="match status" value="1"/>
</dbReference>
<dbReference type="PROSITE" id="PS00479">
    <property type="entry name" value="ZF_DAG_PE_1"/>
    <property type="match status" value="1"/>
</dbReference>
<dbReference type="PROSITE" id="PS50081">
    <property type="entry name" value="ZF_DAG_PE_2"/>
    <property type="match status" value="1"/>
</dbReference>
<reference key="1">
    <citation type="journal article" date="1995" name="FEBS Lett.">
        <title>A novel partner for the GTP-bound forms of rho and rac.</title>
        <authorList>
            <person name="Madaule P."/>
            <person name="Furuyashiki T."/>
            <person name="Reid T."/>
            <person name="Ishizaki T."/>
            <person name="Watanabe G."/>
            <person name="Morii N."/>
            <person name="Narumiya S."/>
        </authorList>
    </citation>
    <scope>NUCLEOTIDE SEQUENCE [MRNA] (ISOFORM 3)</scope>
    <scope>FUNCTION</scope>
    <source>
        <tissue>Brain</tissue>
    </source>
</reference>
<reference key="2">
    <citation type="journal article" date="1998" name="J. Biol. Chem.">
        <title>Citron Rho-interacting kinase, a novel tissue-specific Ser/Thr kinase encompassing the Rho-Rac-binding protein Citron.</title>
        <authorList>
            <person name="Di Cunto F."/>
            <person name="Calautti E."/>
            <person name="Hsiao J."/>
            <person name="Ong L."/>
            <person name="Topley G."/>
            <person name="Turco E."/>
            <person name="Dotto G.P."/>
        </authorList>
    </citation>
    <scope>NUCLEOTIDE SEQUENCE [MRNA] (ISOFORMS 1 AND 2)</scope>
    <scope>FUNCTION</scope>
    <scope>CATALYTIC ACTIVITY</scope>
    <scope>TISSUE SPECIFICITY</scope>
    <scope>SUBCELLULAR LOCATION</scope>
    <scope>MUTAGENESIS OF LYS-126</scope>
    <source>
        <tissue>Keratinocyte</tissue>
    </source>
</reference>
<reference key="3">
    <citation type="journal article" date="2005" name="Science">
        <title>The transcriptional landscape of the mammalian genome.</title>
        <authorList>
            <person name="Carninci P."/>
            <person name="Kasukawa T."/>
            <person name="Katayama S."/>
            <person name="Gough J."/>
            <person name="Frith M.C."/>
            <person name="Maeda N."/>
            <person name="Oyama R."/>
            <person name="Ravasi T."/>
            <person name="Lenhard B."/>
            <person name="Wells C."/>
            <person name="Kodzius R."/>
            <person name="Shimokawa K."/>
            <person name="Bajic V.B."/>
            <person name="Brenner S.E."/>
            <person name="Batalov S."/>
            <person name="Forrest A.R."/>
            <person name="Zavolan M."/>
            <person name="Davis M.J."/>
            <person name="Wilming L.G."/>
            <person name="Aidinis V."/>
            <person name="Allen J.E."/>
            <person name="Ambesi-Impiombato A."/>
            <person name="Apweiler R."/>
            <person name="Aturaliya R.N."/>
            <person name="Bailey T.L."/>
            <person name="Bansal M."/>
            <person name="Baxter L."/>
            <person name="Beisel K.W."/>
            <person name="Bersano T."/>
            <person name="Bono H."/>
            <person name="Chalk A.M."/>
            <person name="Chiu K.P."/>
            <person name="Choudhary V."/>
            <person name="Christoffels A."/>
            <person name="Clutterbuck D.R."/>
            <person name="Crowe M.L."/>
            <person name="Dalla E."/>
            <person name="Dalrymple B.P."/>
            <person name="de Bono B."/>
            <person name="Della Gatta G."/>
            <person name="di Bernardo D."/>
            <person name="Down T."/>
            <person name="Engstrom P."/>
            <person name="Fagiolini M."/>
            <person name="Faulkner G."/>
            <person name="Fletcher C.F."/>
            <person name="Fukushima T."/>
            <person name="Furuno M."/>
            <person name="Futaki S."/>
            <person name="Gariboldi M."/>
            <person name="Georgii-Hemming P."/>
            <person name="Gingeras T.R."/>
            <person name="Gojobori T."/>
            <person name="Green R.E."/>
            <person name="Gustincich S."/>
            <person name="Harbers M."/>
            <person name="Hayashi Y."/>
            <person name="Hensch T.K."/>
            <person name="Hirokawa N."/>
            <person name="Hill D."/>
            <person name="Huminiecki L."/>
            <person name="Iacono M."/>
            <person name="Ikeo K."/>
            <person name="Iwama A."/>
            <person name="Ishikawa T."/>
            <person name="Jakt M."/>
            <person name="Kanapin A."/>
            <person name="Katoh M."/>
            <person name="Kawasawa Y."/>
            <person name="Kelso J."/>
            <person name="Kitamura H."/>
            <person name="Kitano H."/>
            <person name="Kollias G."/>
            <person name="Krishnan S.P."/>
            <person name="Kruger A."/>
            <person name="Kummerfeld S.K."/>
            <person name="Kurochkin I.V."/>
            <person name="Lareau L.F."/>
            <person name="Lazarevic D."/>
            <person name="Lipovich L."/>
            <person name="Liu J."/>
            <person name="Liuni S."/>
            <person name="McWilliam S."/>
            <person name="Madan Babu M."/>
            <person name="Madera M."/>
            <person name="Marchionni L."/>
            <person name="Matsuda H."/>
            <person name="Matsuzawa S."/>
            <person name="Miki H."/>
            <person name="Mignone F."/>
            <person name="Miyake S."/>
            <person name="Morris K."/>
            <person name="Mottagui-Tabar S."/>
            <person name="Mulder N."/>
            <person name="Nakano N."/>
            <person name="Nakauchi H."/>
            <person name="Ng P."/>
            <person name="Nilsson R."/>
            <person name="Nishiguchi S."/>
            <person name="Nishikawa S."/>
            <person name="Nori F."/>
            <person name="Ohara O."/>
            <person name="Okazaki Y."/>
            <person name="Orlando V."/>
            <person name="Pang K.C."/>
            <person name="Pavan W.J."/>
            <person name="Pavesi G."/>
            <person name="Pesole G."/>
            <person name="Petrovsky N."/>
            <person name="Piazza S."/>
            <person name="Reed J."/>
            <person name="Reid J.F."/>
            <person name="Ring B.Z."/>
            <person name="Ringwald M."/>
            <person name="Rost B."/>
            <person name="Ruan Y."/>
            <person name="Salzberg S.L."/>
            <person name="Sandelin A."/>
            <person name="Schneider C."/>
            <person name="Schoenbach C."/>
            <person name="Sekiguchi K."/>
            <person name="Semple C.A."/>
            <person name="Seno S."/>
            <person name="Sessa L."/>
            <person name="Sheng Y."/>
            <person name="Shibata Y."/>
            <person name="Shimada H."/>
            <person name="Shimada K."/>
            <person name="Silva D."/>
            <person name="Sinclair B."/>
            <person name="Sperling S."/>
            <person name="Stupka E."/>
            <person name="Sugiura K."/>
            <person name="Sultana R."/>
            <person name="Takenaka Y."/>
            <person name="Taki K."/>
            <person name="Tammoja K."/>
            <person name="Tan S.L."/>
            <person name="Tang S."/>
            <person name="Taylor M.S."/>
            <person name="Tegner J."/>
            <person name="Teichmann S.A."/>
            <person name="Ueda H.R."/>
            <person name="van Nimwegen E."/>
            <person name="Verardo R."/>
            <person name="Wei C.L."/>
            <person name="Yagi K."/>
            <person name="Yamanishi H."/>
            <person name="Zabarovsky E."/>
            <person name="Zhu S."/>
            <person name="Zimmer A."/>
            <person name="Hide W."/>
            <person name="Bult C."/>
            <person name="Grimmond S.M."/>
            <person name="Teasdale R.D."/>
            <person name="Liu E.T."/>
            <person name="Brusic V."/>
            <person name="Quackenbush J."/>
            <person name="Wahlestedt C."/>
            <person name="Mattick J.S."/>
            <person name="Hume D.A."/>
            <person name="Kai C."/>
            <person name="Sasaki D."/>
            <person name="Tomaru Y."/>
            <person name="Fukuda S."/>
            <person name="Kanamori-Katayama M."/>
            <person name="Suzuki M."/>
            <person name="Aoki J."/>
            <person name="Arakawa T."/>
            <person name="Iida J."/>
            <person name="Imamura K."/>
            <person name="Itoh M."/>
            <person name="Kato T."/>
            <person name="Kawaji H."/>
            <person name="Kawagashira N."/>
            <person name="Kawashima T."/>
            <person name="Kojima M."/>
            <person name="Kondo S."/>
            <person name="Konno H."/>
            <person name="Nakano K."/>
            <person name="Ninomiya N."/>
            <person name="Nishio T."/>
            <person name="Okada M."/>
            <person name="Plessy C."/>
            <person name="Shibata K."/>
            <person name="Shiraki T."/>
            <person name="Suzuki S."/>
            <person name="Tagami M."/>
            <person name="Waki K."/>
            <person name="Watahiki A."/>
            <person name="Okamura-Oho Y."/>
            <person name="Suzuki H."/>
            <person name="Kawai J."/>
            <person name="Hayashizaki Y."/>
        </authorList>
    </citation>
    <scope>NUCLEOTIDE SEQUENCE [LARGE SCALE MRNA] (ISOFORM 2)</scope>
    <source>
        <tissue>Mammary gland</tissue>
    </source>
</reference>
<reference key="4">
    <citation type="submission" date="2009-01" db="UniProtKB">
        <authorList>
            <person name="Lubec G."/>
            <person name="Sunyer B."/>
            <person name="Chen W.-Q."/>
        </authorList>
    </citation>
    <scope>PROTEIN SEQUENCE OF 246-254</scope>
    <scope>IDENTIFICATION BY MASS SPECTROMETRY</scope>
    <source>
        <strain>OF1</strain>
        <tissue>Hippocampus</tissue>
    </source>
</reference>
<reference key="5">
    <citation type="journal article" date="1998" name="Nature">
        <title>Role of citron kinase as a target of the small GTPase Rho in cytokinesis.</title>
        <authorList>
            <person name="Madaule P."/>
            <person name="Eda M."/>
            <person name="Watanabe N."/>
            <person name="Fujisawa K."/>
            <person name="Matsuoka T."/>
            <person name="Bito H."/>
            <person name="Ishizaki T."/>
            <person name="Narumiya S."/>
        </authorList>
    </citation>
    <scope>NUCLEOTIDE SEQUENCE [MRNA] OF 373-2055 (ISOFORM 4)</scope>
    <scope>FUNCTION</scope>
    <source>
        <tissue>Brain</tissue>
    </source>
</reference>
<reference key="6">
    <citation type="journal article" date="2004" name="Genome Res.">
        <title>The status, quality, and expansion of the NIH full-length cDNA project: the Mammalian Gene Collection (MGC).</title>
        <authorList>
            <consortium name="The MGC Project Team"/>
        </authorList>
    </citation>
    <scope>NUCLEOTIDE SEQUENCE [LARGE SCALE MRNA] OF 992-2055 (ISOFORM 5)</scope>
    <source>
        <strain>FVB/N</strain>
        <tissue>Mammary tumor</tissue>
    </source>
</reference>
<reference key="7">
    <citation type="journal article" date="2000" name="Neuron">
        <title>Defective neurogenesis in citron kinase knockout mice by altered cytokinesis and massive apoptosis.</title>
        <authorList>
            <person name="Di Cunto F."/>
            <person name="Imarisio S."/>
            <person name="Hirsch E."/>
            <person name="Broccoli V."/>
            <person name="Bulfone A."/>
            <person name="Migheli A."/>
            <person name="Atzori C."/>
            <person name="Turco E."/>
            <person name="Triolo R."/>
            <person name="Dotto G.P."/>
            <person name="Silengo L."/>
            <person name="Altruda F."/>
        </authorList>
    </citation>
    <scope>FUNCTION</scope>
    <scope>TISSUE SPECIFICITY</scope>
    <scope>DEVELOPMENTAL STAGE</scope>
    <scope>DISRUPTION PHENOTYPE</scope>
</reference>
<reference key="8">
    <citation type="journal article" date="2006" name="Mol. Cell. Proteomics">
        <title>Comprehensive identification of phosphorylation sites in postsynaptic density preparations.</title>
        <authorList>
            <person name="Trinidad J.C."/>
            <person name="Specht C.G."/>
            <person name="Thalhammer A."/>
            <person name="Schoepfer R."/>
            <person name="Burlingame A.L."/>
        </authorList>
    </citation>
    <scope>PHOSPHORYLATION [LARGE SCALE ANALYSIS] AT SER-479</scope>
    <scope>IDENTIFICATION BY MASS SPECTROMETRY [LARGE SCALE ANALYSIS]</scope>
    <source>
        <tissue>Brain</tissue>
    </source>
</reference>
<reference key="9">
    <citation type="journal article" date="2008" name="J. Proteome Res.">
        <title>Large-scale identification and evolution indexing of tyrosine phosphorylation sites from murine brain.</title>
        <authorList>
            <person name="Ballif B.A."/>
            <person name="Carey G.R."/>
            <person name="Sunyaev S.R."/>
            <person name="Gygi S.P."/>
        </authorList>
    </citation>
    <scope>PHOSPHORYLATION [LARGE SCALE ANALYSIS] AT TYR-1237</scope>
    <scope>IDENTIFICATION BY MASS SPECTROMETRY [LARGE SCALE ANALYSIS]</scope>
    <source>
        <tissue>Brain</tissue>
    </source>
</reference>
<reference key="10">
    <citation type="journal article" date="2010" name="Cell">
        <title>A tissue-specific atlas of mouse protein phosphorylation and expression.</title>
        <authorList>
            <person name="Huttlin E.L."/>
            <person name="Jedrychowski M.P."/>
            <person name="Elias J.E."/>
            <person name="Goswami T."/>
            <person name="Rad R."/>
            <person name="Beausoleil S.A."/>
            <person name="Villen J."/>
            <person name="Haas W."/>
            <person name="Sowa M.E."/>
            <person name="Gygi S.P."/>
        </authorList>
    </citation>
    <scope>PHOSPHORYLATION [LARGE SCALE ANALYSIS] AT SER-439 AND SER-479</scope>
    <scope>IDENTIFICATION BY MASS SPECTROMETRY [LARGE SCALE ANALYSIS]</scope>
    <source>
        <tissue>Brain</tissue>
        <tissue>Spleen</tissue>
        <tissue>Testis</tissue>
    </source>
</reference>